<keyword id="KW-0997">Cell inner membrane</keyword>
<keyword id="KW-1003">Cell membrane</keyword>
<keyword id="KW-0406">Ion transport</keyword>
<keyword id="KW-0472">Membrane</keyword>
<keyword id="KW-1185">Reference proteome</keyword>
<keyword id="KW-0769">Symport</keyword>
<keyword id="KW-0812">Transmembrane</keyword>
<keyword id="KW-1133">Transmembrane helix</keyword>
<keyword id="KW-0813">Transport</keyword>
<sequence>MTNDRVESSSGRAARKLRLALMGPAFIAAIGYIDPGNFATNIQAGASFGYKLLWVVVWANLMAMLIQVLSAKLGIATSKNLAEQIRDHYPRPVVWFYWVQAEIIAMATDLAEFIGAAIGFKLILGISLLQGAVLTGIATFLILMLQRRGQKPLEKVIGGLLLFVAAAYIVELIFSQPSLAQLSKGMIIPSLPNSEAVFLAAGVLGATIMPHVIYLHSSLTQHLHGGSRQQRYAATKWDVAIAMTIAGFVNLAMMATAAAAFHFSGHTGIADLDQAYLTLEPLLSHAAATVFGLSLVAAGLSSTVVGTLAGQVVMQGFVRFHIPLWVRRTITMMPSFIVILMGLDPTRILVMSQVLLSFGIALALVPLLIFTSDRTLMGDLVNTQWVKYIGWMIVVLVVALNIWLLVGTALGL</sequence>
<reference key="1">
    <citation type="submission" date="2007-08" db="EMBL/GenBank/DDBJ databases">
        <authorList>
            <consortium name="The Citrobacter koseri Genome Sequencing Project"/>
            <person name="McClelland M."/>
            <person name="Sanderson E.K."/>
            <person name="Porwollik S."/>
            <person name="Spieth J."/>
            <person name="Clifton W.S."/>
            <person name="Latreille P."/>
            <person name="Courtney L."/>
            <person name="Wang C."/>
            <person name="Pepin K."/>
            <person name="Bhonagiri V."/>
            <person name="Nash W."/>
            <person name="Johnson M."/>
            <person name="Thiruvilangam P."/>
            <person name="Wilson R."/>
        </authorList>
    </citation>
    <scope>NUCLEOTIDE SEQUENCE [LARGE SCALE GENOMIC DNA]</scope>
    <source>
        <strain>ATCC BAA-895 / CDC 4225-83 / SGSC4696</strain>
    </source>
</reference>
<gene>
    <name evidence="1" type="primary">mntH</name>
    <name type="ordered locus">CKO_00404</name>
</gene>
<protein>
    <recommendedName>
        <fullName evidence="1">Divalent metal cation transporter MntH</fullName>
    </recommendedName>
</protein>
<accession>A8ADJ8</accession>
<dbReference type="EMBL" id="CP000822">
    <property type="protein sequence ID" value="ABV11561.1"/>
    <property type="status" value="ALT_INIT"/>
    <property type="molecule type" value="Genomic_DNA"/>
</dbReference>
<dbReference type="RefSeq" id="WP_024130137.1">
    <property type="nucleotide sequence ID" value="NC_009792.1"/>
</dbReference>
<dbReference type="SMR" id="A8ADJ8"/>
<dbReference type="STRING" id="290338.CKO_00404"/>
<dbReference type="GeneID" id="45134665"/>
<dbReference type="KEGG" id="cko:CKO_00404"/>
<dbReference type="HOGENOM" id="CLU_020088_2_0_6"/>
<dbReference type="OrthoDB" id="9787548at2"/>
<dbReference type="Proteomes" id="UP000008148">
    <property type="component" value="Chromosome"/>
</dbReference>
<dbReference type="GO" id="GO:0005886">
    <property type="term" value="C:plasma membrane"/>
    <property type="evidence" value="ECO:0007669"/>
    <property type="project" value="UniProtKB-SubCell"/>
</dbReference>
<dbReference type="GO" id="GO:0015086">
    <property type="term" value="F:cadmium ion transmembrane transporter activity"/>
    <property type="evidence" value="ECO:0007669"/>
    <property type="project" value="TreeGrafter"/>
</dbReference>
<dbReference type="GO" id="GO:0005384">
    <property type="term" value="F:manganese ion transmembrane transporter activity"/>
    <property type="evidence" value="ECO:0007669"/>
    <property type="project" value="TreeGrafter"/>
</dbReference>
<dbReference type="GO" id="GO:0046872">
    <property type="term" value="F:metal ion binding"/>
    <property type="evidence" value="ECO:0007669"/>
    <property type="project" value="UniProtKB-UniRule"/>
</dbReference>
<dbReference type="GO" id="GO:0015293">
    <property type="term" value="F:symporter activity"/>
    <property type="evidence" value="ECO:0007669"/>
    <property type="project" value="UniProtKB-UniRule"/>
</dbReference>
<dbReference type="GO" id="GO:0034755">
    <property type="term" value="P:iron ion transmembrane transport"/>
    <property type="evidence" value="ECO:0007669"/>
    <property type="project" value="TreeGrafter"/>
</dbReference>
<dbReference type="HAMAP" id="MF_00221">
    <property type="entry name" value="NRAMP"/>
    <property type="match status" value="1"/>
</dbReference>
<dbReference type="InterPro" id="IPR001046">
    <property type="entry name" value="NRAMP_fam"/>
</dbReference>
<dbReference type="NCBIfam" id="TIGR01197">
    <property type="entry name" value="nramp"/>
    <property type="match status" value="1"/>
</dbReference>
<dbReference type="NCBIfam" id="NF037982">
    <property type="entry name" value="Nramp_1"/>
    <property type="match status" value="1"/>
</dbReference>
<dbReference type="NCBIfam" id="NF001923">
    <property type="entry name" value="PRK00701.1"/>
    <property type="match status" value="1"/>
</dbReference>
<dbReference type="PANTHER" id="PTHR11706:SF33">
    <property type="entry name" value="NATURAL RESISTANCE-ASSOCIATED MACROPHAGE PROTEIN 2"/>
    <property type="match status" value="1"/>
</dbReference>
<dbReference type="PANTHER" id="PTHR11706">
    <property type="entry name" value="SOLUTE CARRIER PROTEIN FAMILY 11 MEMBER"/>
    <property type="match status" value="1"/>
</dbReference>
<dbReference type="Pfam" id="PF01566">
    <property type="entry name" value="Nramp"/>
    <property type="match status" value="1"/>
</dbReference>
<dbReference type="PRINTS" id="PR00447">
    <property type="entry name" value="NATRESASSCMP"/>
</dbReference>
<organism>
    <name type="scientific">Citrobacter koseri (strain ATCC BAA-895 / CDC 4225-83 / SGSC4696)</name>
    <dbReference type="NCBI Taxonomy" id="290338"/>
    <lineage>
        <taxon>Bacteria</taxon>
        <taxon>Pseudomonadati</taxon>
        <taxon>Pseudomonadota</taxon>
        <taxon>Gammaproteobacteria</taxon>
        <taxon>Enterobacterales</taxon>
        <taxon>Enterobacteriaceae</taxon>
        <taxon>Citrobacter</taxon>
    </lineage>
</organism>
<evidence type="ECO:0000255" key="1">
    <source>
        <dbReference type="HAMAP-Rule" id="MF_00221"/>
    </source>
</evidence>
<evidence type="ECO:0000305" key="2"/>
<name>MNTH_CITK8</name>
<comment type="function">
    <text evidence="1">H(+)-stimulated, divalent metal cation uptake system.</text>
</comment>
<comment type="subcellular location">
    <subcellularLocation>
        <location evidence="1">Cell inner membrane</location>
        <topology evidence="1">Multi-pass membrane protein</topology>
    </subcellularLocation>
</comment>
<comment type="similarity">
    <text evidence="1">Belongs to the NRAMP family.</text>
</comment>
<comment type="sequence caution" evidence="2">
    <conflict type="erroneous initiation">
        <sequence resource="EMBL-CDS" id="ABV11561"/>
    </conflict>
    <text>Extended N-terminus.</text>
</comment>
<feature type="chain" id="PRO_0000325603" description="Divalent metal cation transporter MntH">
    <location>
        <begin position="1"/>
        <end position="412"/>
    </location>
</feature>
<feature type="transmembrane region" description="Helical" evidence="1">
    <location>
        <begin position="19"/>
        <end position="39"/>
    </location>
</feature>
<feature type="transmembrane region" description="Helical" evidence="1">
    <location>
        <begin position="46"/>
        <end position="66"/>
    </location>
</feature>
<feature type="transmembrane region" description="Helical" evidence="1">
    <location>
        <begin position="94"/>
        <end position="114"/>
    </location>
</feature>
<feature type="transmembrane region" description="Helical" evidence="1">
    <location>
        <begin position="122"/>
        <end position="142"/>
    </location>
</feature>
<feature type="transmembrane region" description="Helical" evidence="1">
    <location>
        <begin position="156"/>
        <end position="176"/>
    </location>
</feature>
<feature type="transmembrane region" description="Helical" evidence="1">
    <location>
        <begin position="196"/>
        <end position="216"/>
    </location>
</feature>
<feature type="transmembrane region" description="Helical" evidence="1">
    <location>
        <begin position="241"/>
        <end position="261"/>
    </location>
</feature>
<feature type="transmembrane region" description="Helical" evidence="1">
    <location>
        <begin position="290"/>
        <end position="310"/>
    </location>
</feature>
<feature type="transmembrane region" description="Helical" evidence="1">
    <location>
        <begin position="329"/>
        <end position="349"/>
    </location>
</feature>
<feature type="transmembrane region" description="Helical" evidence="1">
    <location>
        <begin position="350"/>
        <end position="370"/>
    </location>
</feature>
<feature type="transmembrane region" description="Helical" evidence="1">
    <location>
        <begin position="389"/>
        <end position="409"/>
    </location>
</feature>
<proteinExistence type="inferred from homology"/>